<keyword id="KW-1185">Reference proteome</keyword>
<keyword id="KW-0687">Ribonucleoprotein</keyword>
<keyword id="KW-0689">Ribosomal protein</keyword>
<keyword id="KW-0694">RNA-binding</keyword>
<keyword id="KW-0699">rRNA-binding</keyword>
<gene>
    <name evidence="1" type="primary">rplT</name>
    <name type="ordered locus">Aasi_0562</name>
</gene>
<name>RL20_AMOA5</name>
<proteinExistence type="inferred from homology"/>
<protein>
    <recommendedName>
        <fullName evidence="1">Large ribosomal subunit protein bL20</fullName>
    </recommendedName>
    <alternativeName>
        <fullName evidence="2">50S ribosomal protein L20</fullName>
    </alternativeName>
</protein>
<sequence length="114" mass="13165">MPRSVNAVASRARRKRVIKLAKGYWGRRKNAWTIAKNAVERALQYAYRDRKAKKREFRRLWIQRINAAAKMNGLSYSQFMGKLAASGIELNRKVLADLAMNNPEAFKEILKKVA</sequence>
<accession>B3ERW1</accession>
<organism>
    <name type="scientific">Amoebophilus asiaticus (strain 5a2)</name>
    <dbReference type="NCBI Taxonomy" id="452471"/>
    <lineage>
        <taxon>Bacteria</taxon>
        <taxon>Pseudomonadati</taxon>
        <taxon>Bacteroidota</taxon>
        <taxon>Cytophagia</taxon>
        <taxon>Cytophagales</taxon>
        <taxon>Amoebophilaceae</taxon>
        <taxon>Candidatus Amoebophilus</taxon>
    </lineage>
</organism>
<feature type="chain" id="PRO_1000122267" description="Large ribosomal subunit protein bL20">
    <location>
        <begin position="1"/>
        <end position="114"/>
    </location>
</feature>
<comment type="function">
    <text evidence="1">Binds directly to 23S ribosomal RNA and is necessary for the in vitro assembly process of the 50S ribosomal subunit. It is not involved in the protein synthesizing functions of that subunit.</text>
</comment>
<comment type="similarity">
    <text evidence="1">Belongs to the bacterial ribosomal protein bL20 family.</text>
</comment>
<dbReference type="EMBL" id="CP001102">
    <property type="protein sequence ID" value="ACE05963.1"/>
    <property type="molecule type" value="Genomic_DNA"/>
</dbReference>
<dbReference type="RefSeq" id="WP_012472731.1">
    <property type="nucleotide sequence ID" value="NC_010830.1"/>
</dbReference>
<dbReference type="SMR" id="B3ERW1"/>
<dbReference type="STRING" id="452471.Aasi_0562"/>
<dbReference type="KEGG" id="aas:Aasi_0562"/>
<dbReference type="eggNOG" id="COG0292">
    <property type="taxonomic scope" value="Bacteria"/>
</dbReference>
<dbReference type="HOGENOM" id="CLU_123265_0_1_10"/>
<dbReference type="OrthoDB" id="9808966at2"/>
<dbReference type="Proteomes" id="UP000001227">
    <property type="component" value="Chromosome"/>
</dbReference>
<dbReference type="GO" id="GO:1990904">
    <property type="term" value="C:ribonucleoprotein complex"/>
    <property type="evidence" value="ECO:0007669"/>
    <property type="project" value="UniProtKB-KW"/>
</dbReference>
<dbReference type="GO" id="GO:0005840">
    <property type="term" value="C:ribosome"/>
    <property type="evidence" value="ECO:0007669"/>
    <property type="project" value="UniProtKB-KW"/>
</dbReference>
<dbReference type="GO" id="GO:0019843">
    <property type="term" value="F:rRNA binding"/>
    <property type="evidence" value="ECO:0007669"/>
    <property type="project" value="UniProtKB-UniRule"/>
</dbReference>
<dbReference type="GO" id="GO:0003735">
    <property type="term" value="F:structural constituent of ribosome"/>
    <property type="evidence" value="ECO:0007669"/>
    <property type="project" value="InterPro"/>
</dbReference>
<dbReference type="GO" id="GO:0000027">
    <property type="term" value="P:ribosomal large subunit assembly"/>
    <property type="evidence" value="ECO:0007669"/>
    <property type="project" value="UniProtKB-UniRule"/>
</dbReference>
<dbReference type="GO" id="GO:0006412">
    <property type="term" value="P:translation"/>
    <property type="evidence" value="ECO:0007669"/>
    <property type="project" value="InterPro"/>
</dbReference>
<dbReference type="CDD" id="cd07026">
    <property type="entry name" value="Ribosomal_L20"/>
    <property type="match status" value="1"/>
</dbReference>
<dbReference type="FunFam" id="1.10.1900.20:FF:000001">
    <property type="entry name" value="50S ribosomal protein L20"/>
    <property type="match status" value="1"/>
</dbReference>
<dbReference type="Gene3D" id="6.10.160.10">
    <property type="match status" value="1"/>
</dbReference>
<dbReference type="Gene3D" id="1.10.1900.20">
    <property type="entry name" value="Ribosomal protein L20"/>
    <property type="match status" value="1"/>
</dbReference>
<dbReference type="HAMAP" id="MF_00382">
    <property type="entry name" value="Ribosomal_bL20"/>
    <property type="match status" value="1"/>
</dbReference>
<dbReference type="InterPro" id="IPR005813">
    <property type="entry name" value="Ribosomal_bL20"/>
</dbReference>
<dbReference type="InterPro" id="IPR049946">
    <property type="entry name" value="RIBOSOMAL_L20_CS"/>
</dbReference>
<dbReference type="InterPro" id="IPR035566">
    <property type="entry name" value="Ribosomal_protein_bL20_C"/>
</dbReference>
<dbReference type="NCBIfam" id="TIGR01032">
    <property type="entry name" value="rplT_bact"/>
    <property type="match status" value="1"/>
</dbReference>
<dbReference type="PANTHER" id="PTHR10986">
    <property type="entry name" value="39S RIBOSOMAL PROTEIN L20"/>
    <property type="match status" value="1"/>
</dbReference>
<dbReference type="Pfam" id="PF00453">
    <property type="entry name" value="Ribosomal_L20"/>
    <property type="match status" value="1"/>
</dbReference>
<dbReference type="PRINTS" id="PR00062">
    <property type="entry name" value="RIBOSOMALL20"/>
</dbReference>
<dbReference type="SUPFAM" id="SSF74731">
    <property type="entry name" value="Ribosomal protein L20"/>
    <property type="match status" value="1"/>
</dbReference>
<dbReference type="PROSITE" id="PS00937">
    <property type="entry name" value="RIBOSOMAL_L20"/>
    <property type="match status" value="1"/>
</dbReference>
<reference key="1">
    <citation type="journal article" date="2010" name="J. Bacteriol.">
        <title>The genome of the amoeba symbiont 'Candidatus Amoebophilus asiaticus' reveals common mechanisms for host cell interaction among amoeba-associated bacteria.</title>
        <authorList>
            <person name="Schmitz-Esser S."/>
            <person name="Tischler P."/>
            <person name="Arnold R."/>
            <person name="Montanaro J."/>
            <person name="Wagner M."/>
            <person name="Rattei T."/>
            <person name="Horn M."/>
        </authorList>
    </citation>
    <scope>NUCLEOTIDE SEQUENCE [LARGE SCALE GENOMIC DNA]</scope>
    <source>
        <strain>5a2</strain>
    </source>
</reference>
<evidence type="ECO:0000255" key="1">
    <source>
        <dbReference type="HAMAP-Rule" id="MF_00382"/>
    </source>
</evidence>
<evidence type="ECO:0000305" key="2"/>